<feature type="chain" id="PRO_0000185731" description="Tumor protein 63">
    <location>
        <begin position="1"/>
        <end position="680"/>
    </location>
</feature>
<feature type="domain" description="SAM">
    <location>
        <begin position="541"/>
        <end position="607"/>
    </location>
</feature>
<feature type="DNA-binding region" evidence="1">
    <location>
        <begin position="170"/>
        <end position="362"/>
    </location>
</feature>
<feature type="region of interest" description="Transcription activation" evidence="1">
    <location>
        <begin position="1"/>
        <end position="107"/>
    </location>
</feature>
<feature type="region of interest" description="Disordered" evidence="2">
    <location>
        <begin position="122"/>
        <end position="171"/>
    </location>
</feature>
<feature type="region of interest" description="Disordered" evidence="2">
    <location>
        <begin position="351"/>
        <end position="393"/>
    </location>
</feature>
<feature type="region of interest" description="Interaction with HIPK2" evidence="1">
    <location>
        <begin position="352"/>
        <end position="388"/>
    </location>
</feature>
<feature type="region of interest" description="Oligomerization" evidence="1">
    <location>
        <begin position="394"/>
        <end position="443"/>
    </location>
</feature>
<feature type="region of interest" description="Disordered" evidence="2">
    <location>
        <begin position="436"/>
        <end position="472"/>
    </location>
</feature>
<feature type="region of interest" description="Transactivation inhibition" evidence="1">
    <location>
        <begin position="610"/>
        <end position="680"/>
    </location>
</feature>
<feature type="compositionally biased region" description="Polar residues" evidence="2">
    <location>
        <begin position="122"/>
        <end position="157"/>
    </location>
</feature>
<feature type="compositionally biased region" description="Basic and acidic residues" evidence="2">
    <location>
        <begin position="351"/>
        <end position="360"/>
    </location>
</feature>
<feature type="compositionally biased region" description="Polar residues" evidence="2">
    <location>
        <begin position="379"/>
        <end position="389"/>
    </location>
</feature>
<feature type="compositionally biased region" description="Low complexity" evidence="2">
    <location>
        <begin position="437"/>
        <end position="463"/>
    </location>
</feature>
<feature type="binding site" evidence="1">
    <location>
        <position position="244"/>
    </location>
    <ligand>
        <name>Zn(2+)</name>
        <dbReference type="ChEBI" id="CHEBI:29105"/>
    </ligand>
</feature>
<feature type="binding site" evidence="1">
    <location>
        <position position="247"/>
    </location>
    <ligand>
        <name>Zn(2+)</name>
        <dbReference type="ChEBI" id="CHEBI:29105"/>
    </ligand>
</feature>
<feature type="binding site" evidence="1">
    <location>
        <position position="308"/>
    </location>
    <ligand>
        <name>Zn(2+)</name>
        <dbReference type="ChEBI" id="CHEBI:29105"/>
    </ligand>
</feature>
<feature type="binding site" evidence="1">
    <location>
        <position position="312"/>
    </location>
    <ligand>
        <name>Zn(2+)</name>
        <dbReference type="ChEBI" id="CHEBI:29105"/>
    </ligand>
</feature>
<feature type="cross-link" description="Glycyl lysine isopeptide (Lys-Gly) (interchain with G-Cter in SUMO)" evidence="1">
    <location>
        <position position="676"/>
    </location>
</feature>
<feature type="splice variant" id="VSP_012475" description="In isoform 2, isoform 4 and isoform 6." evidence="5">
    <original>MNFETSRCATLQYCPDPYIQRFIETPSHFSWKESYYRSAMSQSTQTSEFLSPEVFQHIWDFLEQPICSVQPIDLNFVDEPSENGATNKIEISMDCIRMQDSDLSDPMW</original>
    <variation>MLYLESNAQTQFSE</variation>
    <location>
        <begin position="1"/>
        <end position="108"/>
    </location>
</feature>
<feature type="splice variant" id="VSP_012476" description="In isoform 7, isoform 8 and isoform 9." evidence="5">
    <original>MNFETSRCATLQYCPDPYIQR</original>
    <variation>MPSC</variation>
    <location>
        <begin position="1"/>
        <end position="21"/>
    </location>
</feature>
<feature type="splice variant" id="VSP_012477" description="In isoform 5, isoform 6 and isoform 9." evidence="5">
    <original>QTSMQSQSSYGNSSPPLNKMNSMNKLPSVSQLINPQQRNALTPTTMPEGMGANIPMMGTHMPMAGDMNGLSPTQALPPPLSMPSTSHCTPPPPYPTDCSIVSFLARLGCSSCLDYFTTQGLTTIYQIEHYSMDDLASLKIPEQFRHAIWKGILDHRQLHDFSSPPHLLRTPSGASTVSVGSSETRGERVIDAVRFTLRQTISFPPRDEWNDFNFDMDSRRNKQQRIKEEGE</original>
    <variation>HLLSACFRNELVESRREAPTQSDVFFRHSNPPNHSVYP</variation>
    <location>
        <begin position="450"/>
        <end position="680"/>
    </location>
</feature>
<feature type="splice variant" id="VSP_012478" description="In isoform 3, isoform 4 and isoform 8." evidence="5">
    <original>SFLARLGCSSCLDYFTTQGLTTIYQIEHYSMDDLASLKIPEQFRHAIWKGILDHRQLHDFSSPPHLLRTPSGASTVSVGSSETRGERVIDAVRFTLRQTISFPPRDEWNDFNFDMDSRRNKQQRIKEEGE</original>
    <variation>RIWQV</variation>
    <location>
        <begin position="551"/>
        <end position="680"/>
    </location>
</feature>
<keyword id="KW-0010">Activator</keyword>
<keyword id="KW-0877">Alternative promoter usage</keyword>
<keyword id="KW-0025">Alternative splicing</keyword>
<keyword id="KW-0053">Apoptosis</keyword>
<keyword id="KW-0217">Developmental protein</keyword>
<keyword id="KW-0238">DNA-binding</keyword>
<keyword id="KW-1017">Isopeptide bond</keyword>
<keyword id="KW-0479">Metal-binding</keyword>
<keyword id="KW-0914">Notch signaling pathway</keyword>
<keyword id="KW-0539">Nucleus</keyword>
<keyword id="KW-1185">Reference proteome</keyword>
<keyword id="KW-0804">Transcription</keyword>
<keyword id="KW-0805">Transcription regulation</keyword>
<keyword id="KW-0832">Ubl conjugation</keyword>
<keyword id="KW-0862">Zinc</keyword>
<name>P63_RAT</name>
<dbReference type="EMBL" id="Y10258">
    <property type="protein sequence ID" value="CAB88216.1"/>
    <property type="molecule type" value="mRNA"/>
</dbReference>
<dbReference type="EMBL" id="AJ277446">
    <property type="protein sequence ID" value="CAC37098.1"/>
    <property type="molecule type" value="mRNA"/>
</dbReference>
<dbReference type="EMBL" id="AJ277447">
    <property type="protein sequence ID" value="CAC37099.1"/>
    <property type="molecule type" value="mRNA"/>
</dbReference>
<dbReference type="EMBL" id="AJ277448">
    <property type="protein sequence ID" value="CAC37100.1"/>
    <property type="molecule type" value="mRNA"/>
</dbReference>
<dbReference type="EMBL" id="AJ277449">
    <property type="protein sequence ID" value="CAC37101.1"/>
    <property type="molecule type" value="mRNA"/>
</dbReference>
<dbReference type="EMBL" id="AJ277450">
    <property type="protein sequence ID" value="CAC37102.1"/>
    <property type="molecule type" value="mRNA"/>
</dbReference>
<dbReference type="EMBL" id="AJ277451">
    <property type="protein sequence ID" value="CAC37103.1"/>
    <property type="molecule type" value="mRNA"/>
</dbReference>
<dbReference type="EMBL" id="AJ277452">
    <property type="protein sequence ID" value="CAC37104.1"/>
    <property type="molecule type" value="mRNA"/>
</dbReference>
<dbReference type="EMBL" id="AJ277453">
    <property type="protein sequence ID" value="CAC37105.1"/>
    <property type="molecule type" value="mRNA"/>
</dbReference>
<dbReference type="RefSeq" id="NP_001120811.1">
    <molecule id="Q9JJP6-3"/>
    <property type="nucleotide sequence ID" value="NM_001127339.2"/>
</dbReference>
<dbReference type="RefSeq" id="NP_001120813.1">
    <molecule id="Q9JJP6-5"/>
    <property type="nucleotide sequence ID" value="NM_001127341.1"/>
</dbReference>
<dbReference type="RefSeq" id="NP_001120814.1">
    <molecule id="Q9JJP6-2"/>
    <property type="nucleotide sequence ID" value="NM_001127342.3"/>
</dbReference>
<dbReference type="RefSeq" id="NP_001120815.1">
    <molecule id="Q9JJP6-4"/>
    <property type="nucleotide sequence ID" value="NM_001127343.3"/>
</dbReference>
<dbReference type="RefSeq" id="NP_001120816.1">
    <molecule id="Q9JJP6-6"/>
    <property type="nucleotide sequence ID" value="NM_001127344.2"/>
</dbReference>
<dbReference type="RefSeq" id="NP_062094.1">
    <molecule id="Q9JJP6-1"/>
    <property type="nucleotide sequence ID" value="NM_019221.4"/>
</dbReference>
<dbReference type="RefSeq" id="XP_008767013.1">
    <property type="nucleotide sequence ID" value="XM_008768791.2"/>
</dbReference>
<dbReference type="BMRB" id="Q9JJP6"/>
<dbReference type="SMR" id="Q9JJP6"/>
<dbReference type="FunCoup" id="Q9JJP6">
    <property type="interactions" value="52"/>
</dbReference>
<dbReference type="STRING" id="10116.ENSRNOP00000033463"/>
<dbReference type="GlyGen" id="Q9JJP6">
    <property type="glycosylation" value="1 site"/>
</dbReference>
<dbReference type="PhosphoSitePlus" id="Q9JJP6"/>
<dbReference type="PaxDb" id="10116-ENSRNOP00000033463"/>
<dbReference type="Ensembl" id="ENSRNOT00000002636.8">
    <molecule id="Q9JJP6-2"/>
    <property type="protein sequence ID" value="ENSRNOP00000002636.4"/>
    <property type="gene ID" value="ENSRNOG00000001924.9"/>
</dbReference>
<dbReference type="Ensembl" id="ENSRNOT00000036179.6">
    <molecule id="Q9JJP6-5"/>
    <property type="protein sequence ID" value="ENSRNOP00000032308.4"/>
    <property type="gene ID" value="ENSRNOG00000001924.9"/>
</dbReference>
<dbReference type="Ensembl" id="ENSRNOT00000067251.5">
    <molecule id="Q9JJP6-3"/>
    <property type="protein sequence ID" value="ENSRNOP00000059178.3"/>
    <property type="gene ID" value="ENSRNOG00000001924.9"/>
</dbReference>
<dbReference type="Ensembl" id="ENSRNOT00000068116.5">
    <molecule id="Q9JJP6-1"/>
    <property type="protein sequence ID" value="ENSRNOP00000061884.4"/>
    <property type="gene ID" value="ENSRNOG00000001924.9"/>
</dbReference>
<dbReference type="GeneID" id="246334"/>
<dbReference type="KEGG" id="rno:246334"/>
<dbReference type="AGR" id="RGD:620863"/>
<dbReference type="CTD" id="8626"/>
<dbReference type="RGD" id="620863">
    <property type="gene designation" value="Tp63"/>
</dbReference>
<dbReference type="eggNOG" id="ENOG502QQ48">
    <property type="taxonomic scope" value="Eukaryota"/>
</dbReference>
<dbReference type="GeneTree" id="ENSGT00950000183153"/>
<dbReference type="HOGENOM" id="CLU_019621_1_1_1"/>
<dbReference type="InParanoid" id="Q9JJP6"/>
<dbReference type="OMA" id="DFFSQDV"/>
<dbReference type="OrthoDB" id="5915660at2759"/>
<dbReference type="PhylomeDB" id="Q9JJP6"/>
<dbReference type="TreeFam" id="TF106101"/>
<dbReference type="Reactome" id="R-RNO-6804759">
    <property type="pathway name" value="Regulation of TP53 Activity through Association with Co-factors"/>
</dbReference>
<dbReference type="PRO" id="PR:Q9JJP6"/>
<dbReference type="Proteomes" id="UP000002494">
    <property type="component" value="Chromosome 11"/>
</dbReference>
<dbReference type="Bgee" id="ENSRNOG00000001924">
    <property type="expression patterns" value="Expressed in esophagus and 7 other cell types or tissues"/>
</dbReference>
<dbReference type="GO" id="GO:0000785">
    <property type="term" value="C:chromatin"/>
    <property type="evidence" value="ECO:0000266"/>
    <property type="project" value="RGD"/>
</dbReference>
<dbReference type="GO" id="GO:0005737">
    <property type="term" value="C:cytoplasm"/>
    <property type="evidence" value="ECO:0000266"/>
    <property type="project" value="RGD"/>
</dbReference>
<dbReference type="GO" id="GO:0030425">
    <property type="term" value="C:dendrite"/>
    <property type="evidence" value="ECO:0000314"/>
    <property type="project" value="RGD"/>
</dbReference>
<dbReference type="GO" id="GO:0005654">
    <property type="term" value="C:nucleoplasm"/>
    <property type="evidence" value="ECO:0007669"/>
    <property type="project" value="Ensembl"/>
</dbReference>
<dbReference type="GO" id="GO:0005634">
    <property type="term" value="C:nucleus"/>
    <property type="evidence" value="ECO:0000266"/>
    <property type="project" value="RGD"/>
</dbReference>
<dbReference type="GO" id="GO:0032991">
    <property type="term" value="C:protein-containing complex"/>
    <property type="evidence" value="ECO:0000314"/>
    <property type="project" value="RGD"/>
</dbReference>
<dbReference type="GO" id="GO:0003682">
    <property type="term" value="F:chromatin binding"/>
    <property type="evidence" value="ECO:0000266"/>
    <property type="project" value="RGD"/>
</dbReference>
<dbReference type="GO" id="GO:0003684">
    <property type="term" value="F:damaged DNA binding"/>
    <property type="evidence" value="ECO:0000266"/>
    <property type="project" value="RGD"/>
</dbReference>
<dbReference type="GO" id="GO:0003677">
    <property type="term" value="F:DNA binding"/>
    <property type="evidence" value="ECO:0000266"/>
    <property type="project" value="RGD"/>
</dbReference>
<dbReference type="GO" id="GO:0001228">
    <property type="term" value="F:DNA-binding transcription activator activity, RNA polymerase II-specific"/>
    <property type="evidence" value="ECO:0000266"/>
    <property type="project" value="RGD"/>
</dbReference>
<dbReference type="GO" id="GO:0003700">
    <property type="term" value="F:DNA-binding transcription factor activity"/>
    <property type="evidence" value="ECO:0000314"/>
    <property type="project" value="RGD"/>
</dbReference>
<dbReference type="GO" id="GO:0000981">
    <property type="term" value="F:DNA-binding transcription factor activity, RNA polymerase II-specific"/>
    <property type="evidence" value="ECO:0000318"/>
    <property type="project" value="GO_Central"/>
</dbReference>
<dbReference type="GO" id="GO:0003690">
    <property type="term" value="F:double-stranded DNA binding"/>
    <property type="evidence" value="ECO:0000314"/>
    <property type="project" value="RGD"/>
</dbReference>
<dbReference type="GO" id="GO:0042802">
    <property type="term" value="F:identical protein binding"/>
    <property type="evidence" value="ECO:0000266"/>
    <property type="project" value="RGD"/>
</dbReference>
<dbReference type="GO" id="GO:0097371">
    <property type="term" value="F:MDM2/MDM4 family protein binding"/>
    <property type="evidence" value="ECO:0000266"/>
    <property type="project" value="RGD"/>
</dbReference>
<dbReference type="GO" id="GO:0046872">
    <property type="term" value="F:metal ion binding"/>
    <property type="evidence" value="ECO:0007669"/>
    <property type="project" value="UniProtKB-KW"/>
</dbReference>
<dbReference type="GO" id="GO:0002039">
    <property type="term" value="F:p53 binding"/>
    <property type="evidence" value="ECO:0000266"/>
    <property type="project" value="RGD"/>
</dbReference>
<dbReference type="GO" id="GO:1990841">
    <property type="term" value="F:promoter-specific chromatin binding"/>
    <property type="evidence" value="ECO:0000266"/>
    <property type="project" value="RGD"/>
</dbReference>
<dbReference type="GO" id="GO:0019904">
    <property type="term" value="F:protein domain specific binding"/>
    <property type="evidence" value="ECO:0000353"/>
    <property type="project" value="RGD"/>
</dbReference>
<dbReference type="GO" id="GO:0000978">
    <property type="term" value="F:RNA polymerase II cis-regulatory region sequence-specific DNA binding"/>
    <property type="evidence" value="ECO:0000318"/>
    <property type="project" value="GO_Central"/>
</dbReference>
<dbReference type="GO" id="GO:0043565">
    <property type="term" value="F:sequence-specific DNA binding"/>
    <property type="evidence" value="ECO:0000266"/>
    <property type="project" value="RGD"/>
</dbReference>
<dbReference type="GO" id="GO:0050699">
    <property type="term" value="F:WW domain binding"/>
    <property type="evidence" value="ECO:0000266"/>
    <property type="project" value="RGD"/>
</dbReference>
<dbReference type="GO" id="GO:0048646">
    <property type="term" value="P:anatomical structure formation involved in morphogenesis"/>
    <property type="evidence" value="ECO:0000266"/>
    <property type="project" value="RGD"/>
</dbReference>
<dbReference type="GO" id="GO:0009887">
    <property type="term" value="P:animal organ morphogenesis"/>
    <property type="evidence" value="ECO:0000266"/>
    <property type="project" value="RGD"/>
</dbReference>
<dbReference type="GO" id="GO:0090398">
    <property type="term" value="P:cellular senescence"/>
    <property type="evidence" value="ECO:0000266"/>
    <property type="project" value="RGD"/>
</dbReference>
<dbReference type="GO" id="GO:0006338">
    <property type="term" value="P:chromatin remodeling"/>
    <property type="evidence" value="ECO:0000266"/>
    <property type="project" value="RGD"/>
</dbReference>
<dbReference type="GO" id="GO:0060197">
    <property type="term" value="P:cloacal septation"/>
    <property type="evidence" value="ECO:0000266"/>
    <property type="project" value="RGD"/>
</dbReference>
<dbReference type="GO" id="GO:1904888">
    <property type="term" value="P:cranial skeletal system development"/>
    <property type="evidence" value="ECO:0000266"/>
    <property type="project" value="RGD"/>
</dbReference>
<dbReference type="GO" id="GO:0008340">
    <property type="term" value="P:determination of adult lifespan"/>
    <property type="evidence" value="ECO:0000266"/>
    <property type="project" value="RGD"/>
</dbReference>
<dbReference type="GO" id="GO:0007499">
    <property type="term" value="P:ectoderm and mesoderm interaction"/>
    <property type="evidence" value="ECO:0000266"/>
    <property type="project" value="RGD"/>
</dbReference>
<dbReference type="GO" id="GO:0035115">
    <property type="term" value="P:embryonic forelimb morphogenesis"/>
    <property type="evidence" value="ECO:0000266"/>
    <property type="project" value="RGD"/>
</dbReference>
<dbReference type="GO" id="GO:0035116">
    <property type="term" value="P:embryonic hindlimb morphogenesis"/>
    <property type="evidence" value="ECO:0000266"/>
    <property type="project" value="RGD"/>
</dbReference>
<dbReference type="GO" id="GO:0030326">
    <property type="term" value="P:embryonic limb morphogenesis"/>
    <property type="evidence" value="ECO:0000266"/>
    <property type="project" value="RGD"/>
</dbReference>
<dbReference type="GO" id="GO:0009913">
    <property type="term" value="P:epidermal cell differentiation"/>
    <property type="evidence" value="ECO:0000266"/>
    <property type="project" value="RGD"/>
</dbReference>
<dbReference type="GO" id="GO:0010481">
    <property type="term" value="P:epidermal cell division"/>
    <property type="evidence" value="ECO:0000266"/>
    <property type="project" value="RGD"/>
</dbReference>
<dbReference type="GO" id="GO:0008544">
    <property type="term" value="P:epidermis development"/>
    <property type="evidence" value="ECO:0000266"/>
    <property type="project" value="RGD"/>
</dbReference>
<dbReference type="GO" id="GO:0002064">
    <property type="term" value="P:epithelial cell development"/>
    <property type="evidence" value="ECO:0000266"/>
    <property type="project" value="RGD"/>
</dbReference>
<dbReference type="GO" id="GO:0030855">
    <property type="term" value="P:epithelial cell differentiation"/>
    <property type="evidence" value="ECO:0000266"/>
    <property type="project" value="RGD"/>
</dbReference>
<dbReference type="GO" id="GO:0001736">
    <property type="term" value="P:establishment of planar polarity"/>
    <property type="evidence" value="ECO:0000266"/>
    <property type="project" value="RGD"/>
</dbReference>
<dbReference type="GO" id="GO:0061436">
    <property type="term" value="P:establishment of skin barrier"/>
    <property type="evidence" value="ECO:0000250"/>
    <property type="project" value="UniProtKB"/>
</dbReference>
<dbReference type="GO" id="GO:0048807">
    <property type="term" value="P:female genitalia morphogenesis"/>
    <property type="evidence" value="ECO:0000266"/>
    <property type="project" value="RGD"/>
</dbReference>
<dbReference type="GO" id="GO:0001942">
    <property type="term" value="P:hair follicle development"/>
    <property type="evidence" value="ECO:0000266"/>
    <property type="project" value="RGD"/>
</dbReference>
<dbReference type="GO" id="GO:0031069">
    <property type="term" value="P:hair follicle morphogenesis"/>
    <property type="evidence" value="ECO:0000266"/>
    <property type="project" value="RGD"/>
</dbReference>
<dbReference type="GO" id="GO:0042771">
    <property type="term" value="P:intrinsic apoptotic signaling pathway in response to DNA damage by p53 class mediator"/>
    <property type="evidence" value="ECO:0000266"/>
    <property type="project" value="RGD"/>
</dbReference>
<dbReference type="GO" id="GO:0030216">
    <property type="term" value="P:keratinocyte differentiation"/>
    <property type="evidence" value="ECO:0000266"/>
    <property type="project" value="RGD"/>
</dbReference>
<dbReference type="GO" id="GO:0043616">
    <property type="term" value="P:keratinocyte proliferation"/>
    <property type="evidence" value="ECO:0000266"/>
    <property type="project" value="RGD"/>
</dbReference>
<dbReference type="GO" id="GO:0001738">
    <property type="term" value="P:morphogenesis of a polarized epithelium"/>
    <property type="evidence" value="ECO:0000266"/>
    <property type="project" value="RGD"/>
</dbReference>
<dbReference type="GO" id="GO:0045892">
    <property type="term" value="P:negative regulation of DNA-templated transcription"/>
    <property type="evidence" value="ECO:0000266"/>
    <property type="project" value="RGD"/>
</dbReference>
<dbReference type="GO" id="GO:0033147">
    <property type="term" value="P:negative regulation of intracellular estrogen receptor signaling pathway"/>
    <property type="evidence" value="ECO:0000266"/>
    <property type="project" value="RGD"/>
</dbReference>
<dbReference type="GO" id="GO:0045617">
    <property type="term" value="P:negative regulation of keratinocyte differentiation"/>
    <property type="evidence" value="ECO:0000266"/>
    <property type="project" value="RGD"/>
</dbReference>
<dbReference type="GO" id="GO:2000381">
    <property type="term" value="P:negative regulation of mesoderm development"/>
    <property type="evidence" value="ECO:0000266"/>
    <property type="project" value="RGD"/>
</dbReference>
<dbReference type="GO" id="GO:0000122">
    <property type="term" value="P:negative regulation of transcription by RNA polymerase II"/>
    <property type="evidence" value="ECO:0000266"/>
    <property type="project" value="RGD"/>
</dbReference>
<dbReference type="GO" id="GO:0051402">
    <property type="term" value="P:neuron apoptotic process"/>
    <property type="evidence" value="ECO:0000266"/>
    <property type="project" value="RGD"/>
</dbReference>
<dbReference type="GO" id="GO:0007219">
    <property type="term" value="P:Notch signaling pathway"/>
    <property type="evidence" value="ECO:0000266"/>
    <property type="project" value="RGD"/>
</dbReference>
<dbReference type="GO" id="GO:0042475">
    <property type="term" value="P:odontogenesis of dentin-containing tooth"/>
    <property type="evidence" value="ECO:0000266"/>
    <property type="project" value="RGD"/>
</dbReference>
<dbReference type="GO" id="GO:0007389">
    <property type="term" value="P:pattern specification process"/>
    <property type="evidence" value="ECO:0000266"/>
    <property type="project" value="RGD"/>
</dbReference>
<dbReference type="GO" id="GO:0030859">
    <property type="term" value="P:polarized epithelial cell differentiation"/>
    <property type="evidence" value="ECO:0000266"/>
    <property type="project" value="RGD"/>
</dbReference>
<dbReference type="GO" id="GO:2001235">
    <property type="term" value="P:positive regulation of apoptotic signaling pathway"/>
    <property type="evidence" value="ECO:0000266"/>
    <property type="project" value="RGD"/>
</dbReference>
<dbReference type="GO" id="GO:0008284">
    <property type="term" value="P:positive regulation of cell population proliferation"/>
    <property type="evidence" value="ECO:0000315"/>
    <property type="project" value="RGD"/>
</dbReference>
<dbReference type="GO" id="GO:0045893">
    <property type="term" value="P:positive regulation of DNA-templated transcription"/>
    <property type="evidence" value="ECO:0000266"/>
    <property type="project" value="RGD"/>
</dbReference>
<dbReference type="GO" id="GO:2000271">
    <property type="term" value="P:positive regulation of fibroblast apoptotic process"/>
    <property type="evidence" value="ECO:0000266"/>
    <property type="project" value="RGD"/>
</dbReference>
<dbReference type="GO" id="GO:0010838">
    <property type="term" value="P:positive regulation of keratinocyte proliferation"/>
    <property type="evidence" value="ECO:0000266"/>
    <property type="project" value="RGD"/>
</dbReference>
<dbReference type="GO" id="GO:0045747">
    <property type="term" value="P:positive regulation of Notch signaling pathway"/>
    <property type="evidence" value="ECO:0000266"/>
    <property type="project" value="RGD"/>
</dbReference>
<dbReference type="GO" id="GO:0045669">
    <property type="term" value="P:positive regulation of osteoblast differentiation"/>
    <property type="evidence" value="ECO:0000266"/>
    <property type="project" value="RGD"/>
</dbReference>
<dbReference type="GO" id="GO:1904674">
    <property type="term" value="P:positive regulation of somatic stem cell population maintenance"/>
    <property type="evidence" value="ECO:0000266"/>
    <property type="project" value="RGD"/>
</dbReference>
<dbReference type="GO" id="GO:2000648">
    <property type="term" value="P:positive regulation of stem cell proliferation"/>
    <property type="evidence" value="ECO:0000266"/>
    <property type="project" value="RGD"/>
</dbReference>
<dbReference type="GO" id="GO:0045944">
    <property type="term" value="P:positive regulation of transcription by RNA polymerase II"/>
    <property type="evidence" value="ECO:0000266"/>
    <property type="project" value="RGD"/>
</dbReference>
<dbReference type="GO" id="GO:0036342">
    <property type="term" value="P:post-anal tail morphogenesis"/>
    <property type="evidence" value="ECO:0000266"/>
    <property type="project" value="RGD"/>
</dbReference>
<dbReference type="GO" id="GO:0030850">
    <property type="term" value="P:prostate gland development"/>
    <property type="evidence" value="ECO:0000266"/>
    <property type="project" value="RGD"/>
</dbReference>
<dbReference type="GO" id="GO:0060513">
    <property type="term" value="P:prostatic bud formation"/>
    <property type="evidence" value="ECO:0000266"/>
    <property type="project" value="RGD"/>
</dbReference>
<dbReference type="GO" id="GO:0051262">
    <property type="term" value="P:protein tetramerization"/>
    <property type="evidence" value="ECO:0007669"/>
    <property type="project" value="InterPro"/>
</dbReference>
<dbReference type="GO" id="GO:0009954">
    <property type="term" value="P:proximal/distal pattern formation"/>
    <property type="evidence" value="ECO:0000266"/>
    <property type="project" value="RGD"/>
</dbReference>
<dbReference type="GO" id="GO:0010482">
    <property type="term" value="P:regulation of epidermal cell division"/>
    <property type="evidence" value="ECO:0000250"/>
    <property type="project" value="UniProtKB"/>
</dbReference>
<dbReference type="GO" id="GO:0006357">
    <property type="term" value="P:regulation of transcription by RNA polymerase II"/>
    <property type="evidence" value="ECO:0000318"/>
    <property type="project" value="GO_Central"/>
</dbReference>
<dbReference type="GO" id="GO:0001501">
    <property type="term" value="P:skeletal system development"/>
    <property type="evidence" value="ECO:0000266"/>
    <property type="project" value="RGD"/>
</dbReference>
<dbReference type="GO" id="GO:0098773">
    <property type="term" value="P:skin epidermis development"/>
    <property type="evidence" value="ECO:0000266"/>
    <property type="project" value="RGD"/>
</dbReference>
<dbReference type="GO" id="GO:0043589">
    <property type="term" value="P:skin morphogenesis"/>
    <property type="evidence" value="ECO:0000266"/>
    <property type="project" value="RGD"/>
</dbReference>
<dbReference type="GO" id="GO:0007283">
    <property type="term" value="P:spermatogenesis"/>
    <property type="evidence" value="ECO:0000270"/>
    <property type="project" value="RGD"/>
</dbReference>
<dbReference type="GO" id="GO:0060529">
    <property type="term" value="P:squamous basal epithelial stem cell differentiation involved in prostate gland acinus development"/>
    <property type="evidence" value="ECO:0000266"/>
    <property type="project" value="RGD"/>
</dbReference>
<dbReference type="GO" id="GO:0048863">
    <property type="term" value="P:stem cell differentiation"/>
    <property type="evidence" value="ECO:0000266"/>
    <property type="project" value="RGD"/>
</dbReference>
<dbReference type="GO" id="GO:0072089">
    <property type="term" value="P:stem cell proliferation"/>
    <property type="evidence" value="ECO:0000266"/>
    <property type="project" value="RGD"/>
</dbReference>
<dbReference type="GO" id="GO:0048485">
    <property type="term" value="P:sympathetic nervous system development"/>
    <property type="evidence" value="ECO:0000266"/>
    <property type="project" value="RGD"/>
</dbReference>
<dbReference type="GO" id="GO:0006366">
    <property type="term" value="P:transcription by RNA polymerase II"/>
    <property type="evidence" value="ECO:0000266"/>
    <property type="project" value="RGD"/>
</dbReference>
<dbReference type="CDD" id="cd08367">
    <property type="entry name" value="P53"/>
    <property type="match status" value="1"/>
</dbReference>
<dbReference type="CDD" id="cd09572">
    <property type="entry name" value="SAM_tumor-p63"/>
    <property type="match status" value="1"/>
</dbReference>
<dbReference type="FunFam" id="2.60.40.720:FF:000002">
    <property type="entry name" value="Cellular tumor antigen p53"/>
    <property type="match status" value="1"/>
</dbReference>
<dbReference type="FunFam" id="4.10.170.10:FF:000001">
    <property type="entry name" value="Cellular tumor antigen p53"/>
    <property type="match status" value="1"/>
</dbReference>
<dbReference type="FunFam" id="1.10.150.50:FF:000020">
    <property type="entry name" value="Tumor protein 63 (p63)"/>
    <property type="match status" value="1"/>
</dbReference>
<dbReference type="Gene3D" id="2.60.40.720">
    <property type="match status" value="1"/>
</dbReference>
<dbReference type="Gene3D" id="4.10.170.10">
    <property type="entry name" value="p53-like tetramerisation domain"/>
    <property type="match status" value="1"/>
</dbReference>
<dbReference type="Gene3D" id="1.10.150.50">
    <property type="entry name" value="Transcription Factor, Ets-1"/>
    <property type="match status" value="1"/>
</dbReference>
<dbReference type="InterPro" id="IPR008967">
    <property type="entry name" value="p53-like_TF_DNA-bd_sf"/>
</dbReference>
<dbReference type="InterPro" id="IPR012346">
    <property type="entry name" value="p53/RUNT-type_TF_DNA-bd_sf"/>
</dbReference>
<dbReference type="InterPro" id="IPR011615">
    <property type="entry name" value="p53_DNA-bd"/>
</dbReference>
<dbReference type="InterPro" id="IPR036674">
    <property type="entry name" value="p53_tetramer_sf"/>
</dbReference>
<dbReference type="InterPro" id="IPR010991">
    <property type="entry name" value="p53_tetrameristn"/>
</dbReference>
<dbReference type="InterPro" id="IPR002117">
    <property type="entry name" value="p53_tumour_suppressor"/>
</dbReference>
<dbReference type="InterPro" id="IPR001660">
    <property type="entry name" value="SAM"/>
</dbReference>
<dbReference type="InterPro" id="IPR013761">
    <property type="entry name" value="SAM/pointed_sf"/>
</dbReference>
<dbReference type="InterPro" id="IPR037611">
    <property type="entry name" value="Tumor-p63_SAM"/>
</dbReference>
<dbReference type="PANTHER" id="PTHR11447">
    <property type="entry name" value="CELLULAR TUMOR ANTIGEN P53"/>
    <property type="match status" value="1"/>
</dbReference>
<dbReference type="PANTHER" id="PTHR11447:SF8">
    <property type="entry name" value="TUMOR PROTEIN 63"/>
    <property type="match status" value="1"/>
</dbReference>
<dbReference type="Pfam" id="PF00870">
    <property type="entry name" value="P53"/>
    <property type="match status" value="1"/>
</dbReference>
<dbReference type="Pfam" id="PF07710">
    <property type="entry name" value="P53_tetramer"/>
    <property type="match status" value="1"/>
</dbReference>
<dbReference type="Pfam" id="PF07647">
    <property type="entry name" value="SAM_2"/>
    <property type="match status" value="1"/>
</dbReference>
<dbReference type="PRINTS" id="PR00386">
    <property type="entry name" value="P53SUPPRESSR"/>
</dbReference>
<dbReference type="SMART" id="SM00454">
    <property type="entry name" value="SAM"/>
    <property type="match status" value="1"/>
</dbReference>
<dbReference type="SUPFAM" id="SSF47719">
    <property type="entry name" value="p53 tetramerization domain"/>
    <property type="match status" value="1"/>
</dbReference>
<dbReference type="SUPFAM" id="SSF49417">
    <property type="entry name" value="p53-like transcription factors"/>
    <property type="match status" value="1"/>
</dbReference>
<dbReference type="SUPFAM" id="SSF47769">
    <property type="entry name" value="SAM/Pointed domain"/>
    <property type="match status" value="1"/>
</dbReference>
<dbReference type="PROSITE" id="PS00348">
    <property type="entry name" value="P53"/>
    <property type="match status" value="1"/>
</dbReference>
<organism>
    <name type="scientific">Rattus norvegicus</name>
    <name type="common">Rat</name>
    <dbReference type="NCBI Taxonomy" id="10116"/>
    <lineage>
        <taxon>Eukaryota</taxon>
        <taxon>Metazoa</taxon>
        <taxon>Chordata</taxon>
        <taxon>Craniata</taxon>
        <taxon>Vertebrata</taxon>
        <taxon>Euteleostomi</taxon>
        <taxon>Mammalia</taxon>
        <taxon>Eutheria</taxon>
        <taxon>Euarchontoglires</taxon>
        <taxon>Glires</taxon>
        <taxon>Rodentia</taxon>
        <taxon>Myomorpha</taxon>
        <taxon>Muroidea</taxon>
        <taxon>Muridae</taxon>
        <taxon>Murinae</taxon>
        <taxon>Rattus</taxon>
    </lineage>
</organism>
<sequence>MNFETSRCATLQYCPDPYIQRFIETPSHFSWKESYYRSAMSQSTQTSEFLSPEVFQHIWDFLEQPICSVQPIDLNFVDEPSENGATNKIEISMDCIRMQDSDLSDPMWPQYTNLGLLNGMDQQIQNGSSSTSPYNTDHAQNSVTAPSPYAQPSSTFDALSPSPAIPSNTDYPGPHSFDVSFQQSSTAKSATWTYSTELKKLYCQIAKTCPIQIKVMTPPPQGAVIRAMPVYKKAEHVTEVVKRCPNHELSREFNEGQIAPPSHLIRVEGNSHAQYVEDPITGRQSVLVPYEPPQVGTEFTTVLYNFMCNSSCVGGMNRRPILIIVTLETRDGQVLGRRCFEARICACPGRDRKADEDSIRKQQVSDSAKNGDGTKRPFRQNTHGIQMTSIKKRRSPDDELLYLPVRGRETYEMLLKIKESLELMQYLPQHTIETYRQQQQQQHQHLLQKQTSMQSQSSYGNSSPPLNKMNSMNKLPSVSQLINPQQRNALTPTTMPEGMGANIPMMGTHMPMAGDMNGLSPTQALPPPLSMPSTSHCTPPPPYPTDCSIVSFLARLGCSSCLDYFTTQGLTTIYQIEHYSMDDLASLKIPEQFRHAIWKGILDHRQLHDFSSPPHLLRTPSGASTVSVGSSETRGERVIDAVRFTLRQTISFPPRDEWNDFNFDMDSRRNKQQRIKEEGE</sequence>
<gene>
    <name type="primary">Tp63</name>
    <name type="synonym">Ket</name>
    <name type="synonym">P63</name>
    <name type="synonym">Tp73l</name>
    <name type="synonym">Trp63</name>
</gene>
<reference key="1">
    <citation type="journal article" date="1997" name="Oncogene">
        <title>A novel protein with strong homology to the tumor suppressor p53.</title>
        <authorList>
            <person name="Schmale H."/>
            <person name="Bamberger C."/>
        </authorList>
    </citation>
    <scope>NUCLEOTIDE SEQUENCE [MRNA] (ISOFORM 1)</scope>
    <scope>TISSUE SPECIFICITY</scope>
    <source>
        <tissue>Tongue epithelium</tissue>
    </source>
</reference>
<reference key="2">
    <citation type="journal article" date="2001" name="FEBS Lett.">
        <title>Identification and tissue distribution of novel KET/p63 splice variants.</title>
        <authorList>
            <person name="Bamberger C."/>
            <person name="Schmale H."/>
        </authorList>
    </citation>
    <scope>NUCLEOTIDE SEQUENCE [MRNA] (ISOFORMS 2; 3; 4; 5; 6; 7; 8 AND 9)</scope>
    <scope>FUNCTION</scope>
    <scope>TISSUE SPECIFICITY</scope>
    <source>
        <strain>Wistar</strain>
        <tissue>Tongue</tissue>
    </source>
</reference>
<protein>
    <recommendedName>
        <fullName>Tumor protein 63</fullName>
        <shortName>p63</shortName>
    </recommendedName>
    <alternativeName>
        <fullName>Keratinocyte transcription factor KET</fullName>
    </alternativeName>
    <alternativeName>
        <fullName>Transformation-related protein 63</fullName>
        <shortName>TP63</shortName>
    </alternativeName>
    <alternativeName>
        <fullName>Tumor protein p73-like</fullName>
        <shortName>p73L</shortName>
    </alternativeName>
</protein>
<proteinExistence type="evidence at transcript level"/>
<evidence type="ECO:0000250" key="1"/>
<evidence type="ECO:0000256" key="2">
    <source>
        <dbReference type="SAM" id="MobiDB-lite"/>
    </source>
</evidence>
<evidence type="ECO:0000269" key="3">
    <source>
    </source>
</evidence>
<evidence type="ECO:0000269" key="4">
    <source>
    </source>
</evidence>
<evidence type="ECO:0000303" key="5">
    <source>
    </source>
</evidence>
<evidence type="ECO:0000305" key="6"/>
<comment type="function">
    <text evidence="1 3">Acts as a sequence specific DNA binding transcriptional activator or repressor. The isoforms contain a varying set of transactivation and auto-regulating transactivation inhibiting domains thus showing an isoform specific activity. May be required in conjunction with TP73/p73 for initiation of p53/TP53 dependent apoptosis in response to genotoxic insults and the presence of activated oncogenes. Involved in Notch signaling by probably inducing JAG1 and JAG2. Activates RIPK4 transcription (By similarity). Plays a role in the regulation of epithelial morphogenesis. The ratio of DeltaN-type and TA*-type isoforms may govern the maintenance of epithelial stem cell compartments and regulate the initiation of epithelial stratification from the undifferentiated embryonal ectoderm. Required for limb formation from the apical ectodermal ridge. Activates transcription of the p21 promoter (By similarity).</text>
</comment>
<comment type="cofactor">
    <cofactor evidence="1">
        <name>Zn(2+)</name>
        <dbReference type="ChEBI" id="CHEBI:29105"/>
    </cofactor>
    <text evidence="1">Binds 1 zinc ion per subunit.</text>
</comment>
<comment type="subunit">
    <text evidence="1">Binds DNA as a homotetramer. Isoform composition of the tetramer may determine transactivation activity. Interacts with HIPK2. Interacts with SSRP1, leading to stimulate coactivator activity. Interacts with WWP1. Interacts with PDS5A. Interacts (via activation domain) with NOC2L (By similarity).</text>
</comment>
<comment type="subcellular location">
    <subcellularLocation>
        <location evidence="1">Nucleus</location>
    </subcellularLocation>
</comment>
<comment type="alternative products">
    <event type="alternative promoter"/>
    <event type="alternative splicing"/>
    <isoform>
        <id>Q9JJP6-1</id>
        <name>1</name>
        <name>TA2-alpha</name>
        <sequence type="displayed"/>
    </isoform>
    <isoform>
        <id>Q9JJP6-2</id>
        <name>2</name>
        <name>DeltaN-alpha</name>
        <sequence type="described" ref="VSP_012475"/>
    </isoform>
    <isoform>
        <id>Q9JJP6-3</id>
        <name>3</name>
        <name>TA2-beta</name>
        <sequence type="described" ref="VSP_012478"/>
    </isoform>
    <isoform>
        <id>Q9JJP6-4</id>
        <name>4</name>
        <name>DeltaN-beta</name>
        <sequence type="described" ref="VSP_012475 VSP_012478"/>
    </isoform>
    <isoform>
        <id>Q9JJP6-5</id>
        <name>5</name>
        <name>TA2-gamma</name>
        <sequence type="described" ref="VSP_012477"/>
    </isoform>
    <isoform>
        <id>Q9JJP6-6</id>
        <name>6</name>
        <name>DeltaN-gamma</name>
        <sequence type="described" ref="VSP_012475 VSP_012477"/>
    </isoform>
    <isoform>
        <id>Q9JJP6-7</id>
        <name>7</name>
        <name>TA1-alpha</name>
        <sequence type="described" ref="VSP_012476"/>
    </isoform>
    <isoform>
        <id>Q9JJP6-8</id>
        <name>8</name>
        <name>TA1-beta</name>
        <sequence type="described" ref="VSP_012476 VSP_012478"/>
    </isoform>
    <isoform>
        <id>Q9JJP6-9</id>
        <name>9</name>
        <name>TA1-gamma</name>
        <sequence type="described" ref="VSP_012476 VSP_012477"/>
    </isoform>
</comment>
<comment type="tissue specificity">
    <text evidence="3 4">Widely expressed, notably in thymus, prostate, placenta, and skeletal muscle, although the precise isoform varies according to tissue type. Progenitor cell layers of skin, breast and prostate express high levels of DeltaN-type isoforms.</text>
</comment>
<comment type="domain">
    <text evidence="1">The transactivation inhibitory domain (TID) can interact with, and inhibit the activity of the N-terminal transcriptional activation domain of TA*-type isoforms.</text>
</comment>
<comment type="PTM">
    <text evidence="1">May be sumoylated.</text>
</comment>
<comment type="PTM">
    <text evidence="1">Ubiquitinated. Polyubiquitination involves WWP1 and leads to proteasomal degradation of this protein (By similarity).</text>
</comment>
<comment type="miscellaneous">
    <molecule>Isoform 1</molecule>
    <text>Produced by alternative promoter usage.</text>
</comment>
<comment type="miscellaneous">
    <molecule>Isoform 2</molecule>
    <text evidence="6">Produced by alternative promoter usage.</text>
</comment>
<comment type="miscellaneous">
    <molecule>Isoform 3</molecule>
    <text evidence="6">Produced by alternative splicing of isoform 1.</text>
</comment>
<comment type="miscellaneous">
    <molecule>Isoform 4</molecule>
    <text evidence="6">Produced by alternative splicing of isoform 2.</text>
</comment>
<comment type="miscellaneous">
    <molecule>Isoform 5</molecule>
    <text evidence="6">Produced by alternative splicing of isoform 1.</text>
</comment>
<comment type="miscellaneous">
    <molecule>Isoform 6</molecule>
    <text evidence="6">Produced by alternative splicing of isoform 2.</text>
</comment>
<comment type="miscellaneous">
    <molecule>Isoform 7</molecule>
    <text evidence="6">Produced by alternative promoter usage.</text>
</comment>
<comment type="miscellaneous">
    <molecule>Isoform 8</molecule>
    <text evidence="6">Produced by alternative splicing of isoform 7.</text>
</comment>
<comment type="miscellaneous">
    <molecule>Isoform 9</molecule>
    <text evidence="6">Produced by alternative splicing of isoform 7.</text>
</comment>
<comment type="similarity">
    <text evidence="6">Belongs to the p53 family.</text>
</comment>
<accession>Q9JJP6</accession>
<accession>Q99JD6</accession>
<accession>Q99JD7</accession>
<accession>Q99JD8</accession>
<accession>Q99JD9</accession>
<accession>Q99JE0</accession>
<accession>Q99JE1</accession>
<accession>Q99JE2</accession>
<accession>Q99JE3</accession>